<evidence type="ECO:0000250" key="1"/>
<evidence type="ECO:0000305" key="2"/>
<reference key="1">
    <citation type="journal article" date="1978" name="Proc. Natl. Acad. Sci. U.S.A.">
        <title>DNA sequence from the histidine operon control region: seven histidine codons in a row.</title>
        <authorList>
            <person name="Barnes W.M."/>
        </authorList>
    </citation>
    <scope>NUCLEOTIDE SEQUENCE [GENOMIC DNA]</scope>
    <source>
        <strain>LT2</strain>
    </source>
</reference>
<reference key="2">
    <citation type="journal article" date="1988" name="J. Mol. Biol.">
        <title>Structure and function of the Salmonella typhimurium and Escherichia coli K-12 histidine operons.</title>
        <authorList>
            <person name="Carlomagno M.S."/>
            <person name="Chiariotti L."/>
            <person name="Alifano P."/>
            <person name="Nappo A.G."/>
            <person name="Bruni C.B."/>
        </authorList>
    </citation>
    <scope>NUCLEOTIDE SEQUENCE [GENOMIC DNA]</scope>
    <source>
        <strain>LT2</strain>
    </source>
</reference>
<reference key="3">
    <citation type="submission" date="1989-08" db="EMBL/GenBank/DDBJ databases">
        <authorList>
            <person name="Barnes W.M."/>
            <person name="Husson R.N."/>
            <person name="Whittier R."/>
        </authorList>
    </citation>
    <scope>NUCLEOTIDE SEQUENCE [GENOMIC DNA]</scope>
    <source>
        <strain>LT2</strain>
    </source>
</reference>
<reference key="4">
    <citation type="journal article" date="2001" name="Nature">
        <title>Complete genome sequence of Salmonella enterica serovar Typhimurium LT2.</title>
        <authorList>
            <person name="McClelland M."/>
            <person name="Sanderson K.E."/>
            <person name="Spieth J."/>
            <person name="Clifton S.W."/>
            <person name="Latreille P."/>
            <person name="Courtney L."/>
            <person name="Porwollik S."/>
            <person name="Ali J."/>
            <person name="Dante M."/>
            <person name="Du F."/>
            <person name="Hou S."/>
            <person name="Layman D."/>
            <person name="Leonard S."/>
            <person name="Nguyen C."/>
            <person name="Scott K."/>
            <person name="Holmes A."/>
            <person name="Grewal N."/>
            <person name="Mulvaney E."/>
            <person name="Ryan E."/>
            <person name="Sun H."/>
            <person name="Florea L."/>
            <person name="Miller W."/>
            <person name="Stoneking T."/>
            <person name="Nhan M."/>
            <person name="Waterston R."/>
            <person name="Wilson R.K."/>
        </authorList>
    </citation>
    <scope>NUCLEOTIDE SEQUENCE [LARGE SCALE GENOMIC DNA]</scope>
    <source>
        <strain>LT2 / SGSC1412 / ATCC 700720</strain>
    </source>
</reference>
<organism>
    <name type="scientific">Salmonella typhimurium (strain LT2 / SGSC1412 / ATCC 700720)</name>
    <dbReference type="NCBI Taxonomy" id="99287"/>
    <lineage>
        <taxon>Bacteria</taxon>
        <taxon>Pseudomonadati</taxon>
        <taxon>Pseudomonadota</taxon>
        <taxon>Gammaproteobacteria</taxon>
        <taxon>Enterobacterales</taxon>
        <taxon>Enterobacteriaceae</taxon>
        <taxon>Salmonella</taxon>
    </lineage>
</organism>
<protein>
    <recommendedName>
        <fullName>his operon leader peptide</fullName>
    </recommendedName>
    <alternativeName>
        <fullName>his operon attenuator peptide</fullName>
    </alternativeName>
</protein>
<dbReference type="EMBL" id="V01371">
    <property type="protein sequence ID" value="CAA24656.1"/>
    <property type="molecule type" value="Genomic_DNA"/>
</dbReference>
<dbReference type="EMBL" id="X13464">
    <property type="protein sequence ID" value="CAA31821.1"/>
    <property type="molecule type" value="Genomic_DNA"/>
</dbReference>
<dbReference type="EMBL" id="J01804">
    <property type="protein sequence ID" value="AAA88613.1"/>
    <property type="molecule type" value="Genomic_DNA"/>
</dbReference>
<dbReference type="EMBL" id="AE006468">
    <property type="status" value="NOT_ANNOTATED_CDS"/>
    <property type="molecule type" value="Genomic_DNA"/>
</dbReference>
<dbReference type="Proteomes" id="UP000001014">
    <property type="component" value="Chromosome"/>
</dbReference>
<dbReference type="GO" id="GO:0000105">
    <property type="term" value="P:L-histidine biosynthetic process"/>
    <property type="evidence" value="ECO:0007669"/>
    <property type="project" value="UniProtKB-KW"/>
</dbReference>
<dbReference type="InterPro" id="IPR012565">
    <property type="entry name" value="His_leader"/>
</dbReference>
<dbReference type="Pfam" id="PF08047">
    <property type="entry name" value="His_leader"/>
    <property type="match status" value="1"/>
</dbReference>
<comment type="function">
    <text evidence="1">This protein is involved in the attenuation mechanism for the control of the expression of the his operon structural genes.</text>
</comment>
<comment type="similarity">
    <text evidence="2">Belongs to the HisL family.</text>
</comment>
<sequence>MTRVQFKHHHHHHHPD</sequence>
<keyword id="KW-0028">Amino-acid biosynthesis</keyword>
<keyword id="KW-0368">Histidine biosynthesis</keyword>
<keyword id="KW-0428">Leader peptide</keyword>
<keyword id="KW-1185">Reference proteome</keyword>
<gene>
    <name type="primary">hisL</name>
    <name type="ordered locus">STM2070.1</name>
</gene>
<proteinExistence type="inferred from homology"/>
<accession>P60997</accession>
<accession>P03058</accession>
<name>LPHI_SALTY</name>
<feature type="peptide" id="PRO_0000043991" description="his operon leader peptide">
    <location>
        <begin position="1"/>
        <end position="16"/>
    </location>
</feature>